<sequence>MERPSPCGSWLVGCLFTIAVFQPPVQVLGDAGKVYIAPLRDTANLPCPLFLWPNMVLSEMRWYRPGHLPRTQAVHVFRDGQDRDEDLMPEYKGRTALVRDAHKESYILQISNVRLEDRGLYQCQVWVGNSSREDNVTLQVAVLGSDPYIHVKGYDAGWIELLCQSVGWFPKPWTEWRDTTGRALLSLSEVHSLDENGLFRTAVSSRIRDNALGNVSCTIHNEALGQEKTTAMIIGAPERGSLSSPAVALSVVLPVLGLLILLGIWLICKQKKSKEKLLYEQAMEVENLLEDHAKEKGRLHKALKKLRSELKLKRAAANAGWRRARLHFVAVTLDPDTAHPKLILSEDRRCVRLGDRKRPVPDNPERFDFVVSVLGSEYFTTGCHYWEVYVGEKTKWILGVCSESVSRKGKVTASPANGHWLVRQSRGNEYEALTSPQTSFRLKESPKCVGIFLDYEAGIISFYNVTDKSHIFTFTHSFSSPLRPFFEPCLHDEGKNTAPLIICTELQKSEESIVPKQEGKDRANGDVSLKMNPSLLSPQGSELFLLNDTWPSNLGPALKGLKVPSL</sequence>
<accession>Q9JLN5</accession>
<accession>Q3UV82</accession>
<accession>Q6P4T5</accession>
<accession>Q8CEH1</accession>
<feature type="signal peptide" evidence="3">
    <location>
        <begin position="1"/>
        <end position="29"/>
    </location>
</feature>
<feature type="chain" id="PRO_0000226089" description="Erythroid membrane-associated protein">
    <location>
        <begin position="30"/>
        <end position="566"/>
    </location>
</feature>
<feature type="topological domain" description="Extracellular" evidence="3">
    <location>
        <begin position="30"/>
        <end position="246"/>
    </location>
</feature>
<feature type="transmembrane region" description="Helical" evidence="3">
    <location>
        <begin position="247"/>
        <end position="267"/>
    </location>
</feature>
<feature type="topological domain" description="Cytoplasmic" evidence="3">
    <location>
        <begin position="268"/>
        <end position="566"/>
    </location>
</feature>
<feature type="domain" description="Ig-like V-type">
    <location>
        <begin position="30"/>
        <end position="139"/>
    </location>
</feature>
<feature type="domain" description="B30.2/SPRY" evidence="5">
    <location>
        <begin position="311"/>
        <end position="509"/>
    </location>
</feature>
<feature type="modified residue" description="Phosphoserine" evidence="10">
    <location>
        <position position="509"/>
    </location>
</feature>
<feature type="glycosylation site" description="N-linked (GlcNAc...) asparagine" evidence="3">
    <location>
        <position position="135"/>
    </location>
</feature>
<feature type="glycosylation site" description="N-linked (GlcNAc...) asparagine" evidence="3">
    <location>
        <position position="214"/>
    </location>
</feature>
<feature type="disulfide bond" evidence="4">
    <location>
        <begin position="47"/>
        <end position="123"/>
    </location>
</feature>
<feature type="splice variant" id="VSP_017425" description="In isoform 2." evidence="8">
    <original>VWVGNSSREDNVTLQVAVLGSDP</original>
    <variation>EFPYTGAQNLHRTKKPLLPLMTN</variation>
    <location>
        <begin position="125"/>
        <end position="147"/>
    </location>
</feature>
<feature type="splice variant" id="VSP_017426" description="In isoform 3." evidence="7">
    <location>
        <begin position="142"/>
        <end position="143"/>
    </location>
</feature>
<feature type="splice variant" id="VSP_017427" description="In isoform 2." evidence="8">
    <location>
        <begin position="148"/>
        <end position="566"/>
    </location>
</feature>
<feature type="sequence conflict" description="In Ref. 1; AAF31162." evidence="9" ref="1">
    <original>Y</original>
    <variation>S</variation>
    <location>
        <position position="91"/>
    </location>
</feature>
<feature type="sequence conflict" description="In Ref. 1; AAF31162." evidence="9" ref="1">
    <original>T</original>
    <variation>A</variation>
    <location>
        <position position="180"/>
    </location>
</feature>
<feature type="sequence conflict" description="In Ref. 1; AAF31162." evidence="9" ref="1">
    <original>N</original>
    <variation>I</variation>
    <location>
        <position position="221"/>
    </location>
</feature>
<feature type="sequence conflict" description="In Ref. 1; AAF31162." evidence="9" ref="1">
    <original>N</original>
    <variation>S</variation>
    <location>
        <position position="287"/>
    </location>
</feature>
<feature type="sequence conflict" description="In Ref. 1; AAF31162." evidence="9" ref="1">
    <original>L</original>
    <variation>P</variation>
    <location>
        <position position="374"/>
    </location>
</feature>
<feature type="sequence conflict" description="In Ref. 2; BAC25788." evidence="9" ref="2">
    <original>F</original>
    <variation>L</variation>
    <location>
        <position position="462"/>
    </location>
</feature>
<feature type="sequence conflict" description="In Ref. 1; AAF31162." evidence="9" ref="1">
    <original>S</original>
    <variation>C</variation>
    <location>
        <position position="541"/>
    </location>
</feature>
<feature type="sequence conflict" description="In Ref. 1; AAF31162." evidence="9" ref="1">
    <original>L</original>
    <variation>F</variation>
    <location>
        <position position="554"/>
    </location>
</feature>
<organism>
    <name type="scientific">Mus musculus</name>
    <name type="common">Mouse</name>
    <dbReference type="NCBI Taxonomy" id="10090"/>
    <lineage>
        <taxon>Eukaryota</taxon>
        <taxon>Metazoa</taxon>
        <taxon>Chordata</taxon>
        <taxon>Craniata</taxon>
        <taxon>Vertebrata</taxon>
        <taxon>Euteleostomi</taxon>
        <taxon>Mammalia</taxon>
        <taxon>Eutheria</taxon>
        <taxon>Euarchontoglires</taxon>
        <taxon>Glires</taxon>
        <taxon>Rodentia</taxon>
        <taxon>Myomorpha</taxon>
        <taxon>Muroidea</taxon>
        <taxon>Muridae</taxon>
        <taxon>Murinae</taxon>
        <taxon>Mus</taxon>
        <taxon>Mus</taxon>
    </lineage>
</organism>
<reference key="1">
    <citation type="journal article" date="2000" name="Gene">
        <title>Ermap, a gene coding for a novel erythroid specific adhesion/receptor membrane protein.</title>
        <authorList>
            <person name="Ye T.-Z."/>
            <person name="Gordon C.T."/>
            <person name="Lai Y.-H."/>
            <person name="Fujiwara Y."/>
            <person name="Peters L.L."/>
            <person name="Perkins A.C."/>
            <person name="Chui D.H.K."/>
        </authorList>
    </citation>
    <scope>NUCLEOTIDE SEQUENCE [MRNA] (ISOFORM 1)</scope>
    <scope>DEVELOPMENTAL STAGE</scope>
    <scope>TISSUE SPECIFICITY</scope>
    <scope>SUBCELLULAR LOCATION</scope>
    <source>
        <strain>C57BL/6J</strain>
        <tissue>Erythroid cell</tissue>
    </source>
</reference>
<reference key="2">
    <citation type="journal article" date="2005" name="Science">
        <title>The transcriptional landscape of the mammalian genome.</title>
        <authorList>
            <person name="Carninci P."/>
            <person name="Kasukawa T."/>
            <person name="Katayama S."/>
            <person name="Gough J."/>
            <person name="Frith M.C."/>
            <person name="Maeda N."/>
            <person name="Oyama R."/>
            <person name="Ravasi T."/>
            <person name="Lenhard B."/>
            <person name="Wells C."/>
            <person name="Kodzius R."/>
            <person name="Shimokawa K."/>
            <person name="Bajic V.B."/>
            <person name="Brenner S.E."/>
            <person name="Batalov S."/>
            <person name="Forrest A.R."/>
            <person name="Zavolan M."/>
            <person name="Davis M.J."/>
            <person name="Wilming L.G."/>
            <person name="Aidinis V."/>
            <person name="Allen J.E."/>
            <person name="Ambesi-Impiombato A."/>
            <person name="Apweiler R."/>
            <person name="Aturaliya R.N."/>
            <person name="Bailey T.L."/>
            <person name="Bansal M."/>
            <person name="Baxter L."/>
            <person name="Beisel K.W."/>
            <person name="Bersano T."/>
            <person name="Bono H."/>
            <person name="Chalk A.M."/>
            <person name="Chiu K.P."/>
            <person name="Choudhary V."/>
            <person name="Christoffels A."/>
            <person name="Clutterbuck D.R."/>
            <person name="Crowe M.L."/>
            <person name="Dalla E."/>
            <person name="Dalrymple B.P."/>
            <person name="de Bono B."/>
            <person name="Della Gatta G."/>
            <person name="di Bernardo D."/>
            <person name="Down T."/>
            <person name="Engstrom P."/>
            <person name="Fagiolini M."/>
            <person name="Faulkner G."/>
            <person name="Fletcher C.F."/>
            <person name="Fukushima T."/>
            <person name="Furuno M."/>
            <person name="Futaki S."/>
            <person name="Gariboldi M."/>
            <person name="Georgii-Hemming P."/>
            <person name="Gingeras T.R."/>
            <person name="Gojobori T."/>
            <person name="Green R.E."/>
            <person name="Gustincich S."/>
            <person name="Harbers M."/>
            <person name="Hayashi Y."/>
            <person name="Hensch T.K."/>
            <person name="Hirokawa N."/>
            <person name="Hill D."/>
            <person name="Huminiecki L."/>
            <person name="Iacono M."/>
            <person name="Ikeo K."/>
            <person name="Iwama A."/>
            <person name="Ishikawa T."/>
            <person name="Jakt M."/>
            <person name="Kanapin A."/>
            <person name="Katoh M."/>
            <person name="Kawasawa Y."/>
            <person name="Kelso J."/>
            <person name="Kitamura H."/>
            <person name="Kitano H."/>
            <person name="Kollias G."/>
            <person name="Krishnan S.P."/>
            <person name="Kruger A."/>
            <person name="Kummerfeld S.K."/>
            <person name="Kurochkin I.V."/>
            <person name="Lareau L.F."/>
            <person name="Lazarevic D."/>
            <person name="Lipovich L."/>
            <person name="Liu J."/>
            <person name="Liuni S."/>
            <person name="McWilliam S."/>
            <person name="Madan Babu M."/>
            <person name="Madera M."/>
            <person name="Marchionni L."/>
            <person name="Matsuda H."/>
            <person name="Matsuzawa S."/>
            <person name="Miki H."/>
            <person name="Mignone F."/>
            <person name="Miyake S."/>
            <person name="Morris K."/>
            <person name="Mottagui-Tabar S."/>
            <person name="Mulder N."/>
            <person name="Nakano N."/>
            <person name="Nakauchi H."/>
            <person name="Ng P."/>
            <person name="Nilsson R."/>
            <person name="Nishiguchi S."/>
            <person name="Nishikawa S."/>
            <person name="Nori F."/>
            <person name="Ohara O."/>
            <person name="Okazaki Y."/>
            <person name="Orlando V."/>
            <person name="Pang K.C."/>
            <person name="Pavan W.J."/>
            <person name="Pavesi G."/>
            <person name="Pesole G."/>
            <person name="Petrovsky N."/>
            <person name="Piazza S."/>
            <person name="Reed J."/>
            <person name="Reid J.F."/>
            <person name="Ring B.Z."/>
            <person name="Ringwald M."/>
            <person name="Rost B."/>
            <person name="Ruan Y."/>
            <person name="Salzberg S.L."/>
            <person name="Sandelin A."/>
            <person name="Schneider C."/>
            <person name="Schoenbach C."/>
            <person name="Sekiguchi K."/>
            <person name="Semple C.A."/>
            <person name="Seno S."/>
            <person name="Sessa L."/>
            <person name="Sheng Y."/>
            <person name="Shibata Y."/>
            <person name="Shimada H."/>
            <person name="Shimada K."/>
            <person name="Silva D."/>
            <person name="Sinclair B."/>
            <person name="Sperling S."/>
            <person name="Stupka E."/>
            <person name="Sugiura K."/>
            <person name="Sultana R."/>
            <person name="Takenaka Y."/>
            <person name="Taki K."/>
            <person name="Tammoja K."/>
            <person name="Tan S.L."/>
            <person name="Tang S."/>
            <person name="Taylor M.S."/>
            <person name="Tegner J."/>
            <person name="Teichmann S.A."/>
            <person name="Ueda H.R."/>
            <person name="van Nimwegen E."/>
            <person name="Verardo R."/>
            <person name="Wei C.L."/>
            <person name="Yagi K."/>
            <person name="Yamanishi H."/>
            <person name="Zabarovsky E."/>
            <person name="Zhu S."/>
            <person name="Zimmer A."/>
            <person name="Hide W."/>
            <person name="Bult C."/>
            <person name="Grimmond S.M."/>
            <person name="Teasdale R.D."/>
            <person name="Liu E.T."/>
            <person name="Brusic V."/>
            <person name="Quackenbush J."/>
            <person name="Wahlestedt C."/>
            <person name="Mattick J.S."/>
            <person name="Hume D.A."/>
            <person name="Kai C."/>
            <person name="Sasaki D."/>
            <person name="Tomaru Y."/>
            <person name="Fukuda S."/>
            <person name="Kanamori-Katayama M."/>
            <person name="Suzuki M."/>
            <person name="Aoki J."/>
            <person name="Arakawa T."/>
            <person name="Iida J."/>
            <person name="Imamura K."/>
            <person name="Itoh M."/>
            <person name="Kato T."/>
            <person name="Kawaji H."/>
            <person name="Kawagashira N."/>
            <person name="Kawashima T."/>
            <person name="Kojima M."/>
            <person name="Kondo S."/>
            <person name="Konno H."/>
            <person name="Nakano K."/>
            <person name="Ninomiya N."/>
            <person name="Nishio T."/>
            <person name="Okada M."/>
            <person name="Plessy C."/>
            <person name="Shibata K."/>
            <person name="Shiraki T."/>
            <person name="Suzuki S."/>
            <person name="Tagami M."/>
            <person name="Waki K."/>
            <person name="Watahiki A."/>
            <person name="Okamura-Oho Y."/>
            <person name="Suzuki H."/>
            <person name="Kawai J."/>
            <person name="Hayashizaki Y."/>
        </authorList>
    </citation>
    <scope>NUCLEOTIDE SEQUENCE [LARGE SCALE MRNA] (ISOFORM 2)</scope>
    <scope>NUCLEOTIDE SEQUENCE [LARGE SCALE MRNA] OF 323-566 (ISOFORM 1)</scope>
    <source>
        <strain>C57BL/6J</strain>
        <tissue>Bone</tissue>
        <tissue>Liver</tissue>
    </source>
</reference>
<reference key="3">
    <citation type="journal article" date="2004" name="Genome Res.">
        <title>The status, quality, and expansion of the NIH full-length cDNA project: the Mammalian Gene Collection (MGC).</title>
        <authorList>
            <consortium name="The MGC Project Team"/>
        </authorList>
    </citation>
    <scope>NUCLEOTIDE SEQUENCE [LARGE SCALE MRNA] (ISOFORM 3)</scope>
    <source>
        <strain>C57BL/6J</strain>
        <tissue>Brain</tissue>
    </source>
</reference>
<reference key="4">
    <citation type="journal article" date="2010" name="Cell">
        <title>A tissue-specific atlas of mouse protein phosphorylation and expression.</title>
        <authorList>
            <person name="Huttlin E.L."/>
            <person name="Jedrychowski M.P."/>
            <person name="Elias J.E."/>
            <person name="Goswami T."/>
            <person name="Rad R."/>
            <person name="Beausoleil S.A."/>
            <person name="Villen J."/>
            <person name="Haas W."/>
            <person name="Sowa M.E."/>
            <person name="Gygi S.P."/>
        </authorList>
    </citation>
    <scope>PHOSPHORYLATION [LARGE SCALE ANALYSIS] AT SER-509</scope>
    <scope>IDENTIFICATION BY MASS SPECTROMETRY [LARGE SCALE ANALYSIS]</scope>
    <source>
        <tissue>Spleen</tissue>
    </source>
</reference>
<dbReference type="EMBL" id="AF153906">
    <property type="protein sequence ID" value="AAF31162.1"/>
    <property type="status" value="ALT_INIT"/>
    <property type="molecule type" value="mRNA"/>
</dbReference>
<dbReference type="EMBL" id="AK028170">
    <property type="protein sequence ID" value="BAC25788.1"/>
    <property type="molecule type" value="mRNA"/>
</dbReference>
<dbReference type="EMBL" id="AK137510">
    <property type="protein sequence ID" value="BAE23390.1"/>
    <property type="status" value="ALT_INIT"/>
    <property type="molecule type" value="mRNA"/>
</dbReference>
<dbReference type="EMBL" id="BC063257">
    <property type="protein sequence ID" value="AAH63257.1"/>
    <property type="status" value="ALT_INIT"/>
    <property type="molecule type" value="mRNA"/>
</dbReference>
<dbReference type="CCDS" id="CCDS18571.2">
    <molecule id="Q9JLN5-1"/>
</dbReference>
<dbReference type="RefSeq" id="NP_001355995.1">
    <molecule id="Q9JLN5-3"/>
    <property type="nucleotide sequence ID" value="NM_001369066.1"/>
</dbReference>
<dbReference type="RefSeq" id="NP_038876.3">
    <molecule id="Q9JLN5-1"/>
    <property type="nucleotide sequence ID" value="NM_013848.3"/>
</dbReference>
<dbReference type="SMR" id="Q9JLN5"/>
<dbReference type="FunCoup" id="Q9JLN5">
    <property type="interactions" value="447"/>
</dbReference>
<dbReference type="STRING" id="10090.ENSMUSP00000123426"/>
<dbReference type="GlyCosmos" id="Q9JLN5">
    <property type="glycosylation" value="2 sites, No reported glycans"/>
</dbReference>
<dbReference type="GlyGen" id="Q9JLN5">
    <property type="glycosylation" value="3 sites, 2 N-linked glycans (2 sites)"/>
</dbReference>
<dbReference type="iPTMnet" id="Q9JLN5"/>
<dbReference type="PhosphoSitePlus" id="Q9JLN5"/>
<dbReference type="PaxDb" id="10090-ENSMUSP00000123426"/>
<dbReference type="ProteomicsDB" id="275645">
    <molecule id="Q9JLN5-1"/>
</dbReference>
<dbReference type="ProteomicsDB" id="275646">
    <molecule id="Q9JLN5-2"/>
</dbReference>
<dbReference type="ProteomicsDB" id="275647">
    <molecule id="Q9JLN5-3"/>
</dbReference>
<dbReference type="Antibodypedia" id="18175">
    <property type="antibodies" value="324 antibodies from 28 providers"/>
</dbReference>
<dbReference type="DNASU" id="27028"/>
<dbReference type="Ensembl" id="ENSMUST00000239029.2">
    <molecule id="Q9JLN5-1"/>
    <property type="protein sequence ID" value="ENSMUSP00000159033.2"/>
    <property type="gene ID" value="ENSMUSG00000028644.18"/>
</dbReference>
<dbReference type="GeneID" id="27028"/>
<dbReference type="KEGG" id="mmu:27028"/>
<dbReference type="UCSC" id="uc008ulh.2">
    <molecule id="Q9JLN5-2"/>
    <property type="organism name" value="mouse"/>
</dbReference>
<dbReference type="UCSC" id="uc012dke.1">
    <molecule id="Q9JLN5-3"/>
    <property type="organism name" value="mouse"/>
</dbReference>
<dbReference type="AGR" id="MGI:1349816"/>
<dbReference type="CTD" id="114625"/>
<dbReference type="MGI" id="MGI:1349816">
    <property type="gene designation" value="Ermap"/>
</dbReference>
<dbReference type="VEuPathDB" id="HostDB:ENSMUSG00000028644"/>
<dbReference type="eggNOG" id="KOG2177">
    <property type="taxonomic scope" value="Eukaryota"/>
</dbReference>
<dbReference type="GeneTree" id="ENSGT00940000160531"/>
<dbReference type="InParanoid" id="Q9JLN5"/>
<dbReference type="OMA" id="LGDRKQP"/>
<dbReference type="OrthoDB" id="6270329at2759"/>
<dbReference type="BioGRID-ORCS" id="27028">
    <property type="hits" value="0 hits in 77 CRISPR screens"/>
</dbReference>
<dbReference type="ChiTaRS" id="Ermap">
    <property type="organism name" value="mouse"/>
</dbReference>
<dbReference type="PRO" id="PR:Q9JLN5"/>
<dbReference type="Proteomes" id="UP000000589">
    <property type="component" value="Chromosome 4"/>
</dbReference>
<dbReference type="RNAct" id="Q9JLN5">
    <property type="molecule type" value="protein"/>
</dbReference>
<dbReference type="Bgee" id="ENSMUSG00000028644">
    <property type="expression patterns" value="Expressed in fetal liver hematopoietic progenitor cell and 75 other cell types or tissues"/>
</dbReference>
<dbReference type="ExpressionAtlas" id="Q9JLN5">
    <property type="expression patterns" value="baseline and differential"/>
</dbReference>
<dbReference type="GO" id="GO:0005737">
    <property type="term" value="C:cytoplasm"/>
    <property type="evidence" value="ECO:0000314"/>
    <property type="project" value="MGI"/>
</dbReference>
<dbReference type="GO" id="GO:0031410">
    <property type="term" value="C:cytoplasmic vesicle"/>
    <property type="evidence" value="ECO:0000314"/>
    <property type="project" value="MGI"/>
</dbReference>
<dbReference type="GO" id="GO:0005886">
    <property type="term" value="C:plasma membrane"/>
    <property type="evidence" value="ECO:0000266"/>
    <property type="project" value="MGI"/>
</dbReference>
<dbReference type="FunFam" id="2.60.120.920:FF:000004">
    <property type="entry name" value="Butyrophilin subfamily 1 member A1"/>
    <property type="match status" value="1"/>
</dbReference>
<dbReference type="FunFam" id="2.60.40.10:FF:000088">
    <property type="entry name" value="Butyrophilin subfamily 1 member A1"/>
    <property type="match status" value="1"/>
</dbReference>
<dbReference type="FunFam" id="2.60.40.10:FF:000208">
    <property type="entry name" value="Butyrophilin subfamily 1 member A1"/>
    <property type="match status" value="1"/>
</dbReference>
<dbReference type="Gene3D" id="2.60.120.920">
    <property type="match status" value="1"/>
</dbReference>
<dbReference type="Gene3D" id="2.60.40.10">
    <property type="entry name" value="Immunoglobulins"/>
    <property type="match status" value="2"/>
</dbReference>
<dbReference type="InterPro" id="IPR001870">
    <property type="entry name" value="B30.2/SPRY"/>
</dbReference>
<dbReference type="InterPro" id="IPR043136">
    <property type="entry name" value="B30.2/SPRY_sf"/>
</dbReference>
<dbReference type="InterPro" id="IPR053896">
    <property type="entry name" value="BTN3A2-like_Ig-C"/>
</dbReference>
<dbReference type="InterPro" id="IPR003879">
    <property type="entry name" value="Butyrophylin_SPRY"/>
</dbReference>
<dbReference type="InterPro" id="IPR013320">
    <property type="entry name" value="ConA-like_dom_sf"/>
</dbReference>
<dbReference type="InterPro" id="IPR007110">
    <property type="entry name" value="Ig-like_dom"/>
</dbReference>
<dbReference type="InterPro" id="IPR036179">
    <property type="entry name" value="Ig-like_dom_sf"/>
</dbReference>
<dbReference type="InterPro" id="IPR013783">
    <property type="entry name" value="Ig-like_fold"/>
</dbReference>
<dbReference type="InterPro" id="IPR003599">
    <property type="entry name" value="Ig_sub"/>
</dbReference>
<dbReference type="InterPro" id="IPR013106">
    <property type="entry name" value="Ig_V-set"/>
</dbReference>
<dbReference type="InterPro" id="IPR006574">
    <property type="entry name" value="PRY"/>
</dbReference>
<dbReference type="InterPro" id="IPR003877">
    <property type="entry name" value="SPRY_dom"/>
</dbReference>
<dbReference type="InterPro" id="IPR050143">
    <property type="entry name" value="TRIM/RBCC"/>
</dbReference>
<dbReference type="PANTHER" id="PTHR24103">
    <property type="entry name" value="E3 UBIQUITIN-PROTEIN LIGASE TRIM"/>
    <property type="match status" value="1"/>
</dbReference>
<dbReference type="Pfam" id="PF22705">
    <property type="entry name" value="C2-set_3"/>
    <property type="match status" value="1"/>
</dbReference>
<dbReference type="Pfam" id="PF13765">
    <property type="entry name" value="PRY"/>
    <property type="match status" value="1"/>
</dbReference>
<dbReference type="Pfam" id="PF00622">
    <property type="entry name" value="SPRY"/>
    <property type="match status" value="1"/>
</dbReference>
<dbReference type="Pfam" id="PF07686">
    <property type="entry name" value="V-set"/>
    <property type="match status" value="1"/>
</dbReference>
<dbReference type="PRINTS" id="PR01407">
    <property type="entry name" value="BUTYPHLNCDUF"/>
</dbReference>
<dbReference type="SMART" id="SM00409">
    <property type="entry name" value="IG"/>
    <property type="match status" value="1"/>
</dbReference>
<dbReference type="SMART" id="SM00406">
    <property type="entry name" value="IGv"/>
    <property type="match status" value="1"/>
</dbReference>
<dbReference type="SMART" id="SM00589">
    <property type="entry name" value="PRY"/>
    <property type="match status" value="1"/>
</dbReference>
<dbReference type="SMART" id="SM00449">
    <property type="entry name" value="SPRY"/>
    <property type="match status" value="1"/>
</dbReference>
<dbReference type="SUPFAM" id="SSF49899">
    <property type="entry name" value="Concanavalin A-like lectins/glucanases"/>
    <property type="match status" value="1"/>
</dbReference>
<dbReference type="SUPFAM" id="SSF48726">
    <property type="entry name" value="Immunoglobulin"/>
    <property type="match status" value="2"/>
</dbReference>
<dbReference type="PROSITE" id="PS50188">
    <property type="entry name" value="B302_SPRY"/>
    <property type="match status" value="1"/>
</dbReference>
<dbReference type="PROSITE" id="PS50835">
    <property type="entry name" value="IG_LIKE"/>
    <property type="match status" value="1"/>
</dbReference>
<proteinExistence type="evidence at protein level"/>
<gene>
    <name type="primary">Ermap</name>
</gene>
<name>ERMAP_MOUSE</name>
<evidence type="ECO:0000250" key="1"/>
<evidence type="ECO:0000250" key="2">
    <source>
        <dbReference type="UniProtKB" id="Q96PL5"/>
    </source>
</evidence>
<evidence type="ECO:0000255" key="3"/>
<evidence type="ECO:0000255" key="4">
    <source>
        <dbReference type="PROSITE-ProRule" id="PRU00114"/>
    </source>
</evidence>
<evidence type="ECO:0000255" key="5">
    <source>
        <dbReference type="PROSITE-ProRule" id="PRU00548"/>
    </source>
</evidence>
<evidence type="ECO:0000269" key="6">
    <source>
    </source>
</evidence>
<evidence type="ECO:0000303" key="7">
    <source>
    </source>
</evidence>
<evidence type="ECO:0000303" key="8">
    <source>
    </source>
</evidence>
<evidence type="ECO:0000305" key="9"/>
<evidence type="ECO:0007744" key="10">
    <source>
    </source>
</evidence>
<comment type="function">
    <text>Possible role as a cell-adhesion or receptor molecule of erythroid cells.</text>
</comment>
<comment type="subcellular location">
    <subcellularLocation>
        <location evidence="2">Cell membrane</location>
        <topology evidence="3">Single-pass type I membrane protein</topology>
    </subcellularLocation>
    <subcellularLocation>
        <location evidence="6">Cytoplasm</location>
    </subcellularLocation>
</comment>
<comment type="alternative products">
    <event type="alternative splicing"/>
    <isoform>
        <id>Q9JLN5-1</id>
        <name>1</name>
        <sequence type="displayed"/>
    </isoform>
    <isoform>
        <id>Q9JLN5-2</id>
        <name>2</name>
        <sequence type="described" ref="VSP_017425 VSP_017427"/>
    </isoform>
    <isoform>
        <id>Q9JLN5-3</id>
        <name>3</name>
        <sequence type="described" ref="VSP_017426"/>
    </isoform>
</comment>
<comment type="tissue specificity">
    <text evidence="6">Expressed in spleen and bone marrow.</text>
</comment>
<comment type="developmental stage">
    <text evidence="6">First detected at 11 dpc. Expressed in fetal liver at 12.5 dpc and 13.5 dpc.</text>
</comment>
<comment type="PTM">
    <text evidence="1">Glycosylated.</text>
</comment>
<comment type="similarity">
    <text evidence="9">Belongs to the immunoglobulin superfamily. BTN/MOG family.</text>
</comment>
<comment type="sequence caution" evidence="9">
    <conflict type="erroneous initiation">
        <sequence resource="EMBL-CDS" id="AAF31162"/>
    </conflict>
</comment>
<comment type="sequence caution" evidence="9">
    <conflict type="erroneous initiation">
        <sequence resource="EMBL-CDS" id="AAH63257"/>
    </conflict>
</comment>
<comment type="sequence caution" evidence="9">
    <conflict type="erroneous initiation">
        <sequence resource="EMBL-CDS" id="BAE23390"/>
    </conflict>
</comment>
<keyword id="KW-0025">Alternative splicing</keyword>
<keyword id="KW-1003">Cell membrane</keyword>
<keyword id="KW-0963">Cytoplasm</keyword>
<keyword id="KW-1015">Disulfide bond</keyword>
<keyword id="KW-0325">Glycoprotein</keyword>
<keyword id="KW-0393">Immunoglobulin domain</keyword>
<keyword id="KW-0472">Membrane</keyword>
<keyword id="KW-0597">Phosphoprotein</keyword>
<keyword id="KW-1185">Reference proteome</keyword>
<keyword id="KW-0732">Signal</keyword>
<keyword id="KW-0812">Transmembrane</keyword>
<keyword id="KW-1133">Transmembrane helix</keyword>
<protein>
    <recommendedName>
        <fullName>Erythroid membrane-associated protein</fullName>
    </recommendedName>
</protein>